<evidence type="ECO:0000255" key="1">
    <source>
        <dbReference type="HAMAP-Rule" id="MF_00532"/>
    </source>
</evidence>
<evidence type="ECO:0000305" key="2"/>
<accession>Q7NBH4</accession>
<proteinExistence type="inferred from homology"/>
<comment type="similarity">
    <text evidence="1">Belongs to the universal ribosomal protein uS9 family.</text>
</comment>
<keyword id="KW-1185">Reference proteome</keyword>
<keyword id="KW-0687">Ribonucleoprotein</keyword>
<keyword id="KW-0689">Ribosomal protein</keyword>
<gene>
    <name evidence="1" type="primary">rpsI</name>
    <name evidence="1" type="synonym">rps9</name>
    <name type="ordered locus">MYCGA2940</name>
    <name type="ORF">MGA_1055</name>
</gene>
<feature type="chain" id="PRO_0000111373" description="Small ribosomal subunit protein uS9">
    <location>
        <begin position="1"/>
        <end position="130"/>
    </location>
</feature>
<name>RS9_MYCGA</name>
<sequence length="130" mass="14451">MAVVTFKGLGRRKSSTALVKLTPGSGKLVINNRKAEDYFPNKIVIQDMRQPLEVTKTASIYDINVVVNGGGFTGQAGAIRLGIARALVNMNPELKKQLKQHKLVTRDARVKERKKFGLYGARRAPQFTKR</sequence>
<protein>
    <recommendedName>
        <fullName evidence="1">Small ribosomal subunit protein uS9</fullName>
    </recommendedName>
    <alternativeName>
        <fullName evidence="2">30S ribosomal protein S9</fullName>
    </alternativeName>
</protein>
<organism>
    <name type="scientific">Mycoplasmoides gallisepticum (strain R(low / passage 15 / clone 2))</name>
    <name type="common">Mycoplasma gallisepticum</name>
    <dbReference type="NCBI Taxonomy" id="710127"/>
    <lineage>
        <taxon>Bacteria</taxon>
        <taxon>Bacillati</taxon>
        <taxon>Mycoplasmatota</taxon>
        <taxon>Mycoplasmoidales</taxon>
        <taxon>Mycoplasmoidaceae</taxon>
        <taxon>Mycoplasmoides</taxon>
    </lineage>
</organism>
<reference key="1">
    <citation type="journal article" date="2003" name="Microbiology">
        <title>The complete genome sequence of the avian pathogen Mycoplasma gallisepticum strain R(low).</title>
        <authorList>
            <person name="Papazisi L."/>
            <person name="Gorton T.S."/>
            <person name="Kutish G."/>
            <person name="Markham P.F."/>
            <person name="Browning G.F."/>
            <person name="Nguyen D.K."/>
            <person name="Swartzell S."/>
            <person name="Madan A."/>
            <person name="Mahairas G."/>
            <person name="Geary S.J."/>
        </authorList>
    </citation>
    <scope>NUCLEOTIDE SEQUENCE [LARGE SCALE GENOMIC DNA]</scope>
    <source>
        <strain>R(low / passage 15 / clone 2)</strain>
    </source>
</reference>
<dbReference type="EMBL" id="AE015450">
    <property type="protein sequence ID" value="AAP56644.2"/>
    <property type="molecule type" value="Genomic_DNA"/>
</dbReference>
<dbReference type="RefSeq" id="WP_011113536.1">
    <property type="nucleotide sequence ID" value="NC_004829.2"/>
</dbReference>
<dbReference type="SMR" id="Q7NBH4"/>
<dbReference type="GeneID" id="93510123"/>
<dbReference type="KEGG" id="mga:MGA_1055"/>
<dbReference type="HOGENOM" id="CLU_046483_2_1_14"/>
<dbReference type="OrthoDB" id="9803965at2"/>
<dbReference type="Proteomes" id="UP000001418">
    <property type="component" value="Chromosome"/>
</dbReference>
<dbReference type="GO" id="GO:0022627">
    <property type="term" value="C:cytosolic small ribosomal subunit"/>
    <property type="evidence" value="ECO:0007669"/>
    <property type="project" value="TreeGrafter"/>
</dbReference>
<dbReference type="GO" id="GO:0003723">
    <property type="term" value="F:RNA binding"/>
    <property type="evidence" value="ECO:0007669"/>
    <property type="project" value="TreeGrafter"/>
</dbReference>
<dbReference type="GO" id="GO:0003735">
    <property type="term" value="F:structural constituent of ribosome"/>
    <property type="evidence" value="ECO:0007669"/>
    <property type="project" value="InterPro"/>
</dbReference>
<dbReference type="GO" id="GO:0006412">
    <property type="term" value="P:translation"/>
    <property type="evidence" value="ECO:0007669"/>
    <property type="project" value="UniProtKB-UniRule"/>
</dbReference>
<dbReference type="FunFam" id="3.30.230.10:FF:000001">
    <property type="entry name" value="30S ribosomal protein S9"/>
    <property type="match status" value="1"/>
</dbReference>
<dbReference type="Gene3D" id="3.30.230.10">
    <property type="match status" value="1"/>
</dbReference>
<dbReference type="HAMAP" id="MF_00532_B">
    <property type="entry name" value="Ribosomal_uS9_B"/>
    <property type="match status" value="1"/>
</dbReference>
<dbReference type="InterPro" id="IPR020568">
    <property type="entry name" value="Ribosomal_Su5_D2-typ_SF"/>
</dbReference>
<dbReference type="InterPro" id="IPR000754">
    <property type="entry name" value="Ribosomal_uS9"/>
</dbReference>
<dbReference type="InterPro" id="IPR023035">
    <property type="entry name" value="Ribosomal_uS9_bac/plastid"/>
</dbReference>
<dbReference type="InterPro" id="IPR020574">
    <property type="entry name" value="Ribosomal_uS9_CS"/>
</dbReference>
<dbReference type="InterPro" id="IPR014721">
    <property type="entry name" value="Ribsml_uS5_D2-typ_fold_subgr"/>
</dbReference>
<dbReference type="NCBIfam" id="NF001099">
    <property type="entry name" value="PRK00132.1"/>
    <property type="match status" value="1"/>
</dbReference>
<dbReference type="PANTHER" id="PTHR21569">
    <property type="entry name" value="RIBOSOMAL PROTEIN S9"/>
    <property type="match status" value="1"/>
</dbReference>
<dbReference type="PANTHER" id="PTHR21569:SF1">
    <property type="entry name" value="SMALL RIBOSOMAL SUBUNIT PROTEIN US9M"/>
    <property type="match status" value="1"/>
</dbReference>
<dbReference type="Pfam" id="PF00380">
    <property type="entry name" value="Ribosomal_S9"/>
    <property type="match status" value="1"/>
</dbReference>
<dbReference type="SUPFAM" id="SSF54211">
    <property type="entry name" value="Ribosomal protein S5 domain 2-like"/>
    <property type="match status" value="1"/>
</dbReference>
<dbReference type="PROSITE" id="PS00360">
    <property type="entry name" value="RIBOSOMAL_S9"/>
    <property type="match status" value="1"/>
</dbReference>